<comment type="sequence caution" evidence="2">
    <conflict type="erroneous initiation">
        <sequence resource="EMBL-CDS" id="BAB10487"/>
    </conflict>
    <text>Truncated N-terminus.</text>
</comment>
<comment type="sequence caution" evidence="2">
    <conflict type="erroneous initiation">
        <sequence resource="EMBL-CDS" id="BAE99466"/>
    </conflict>
    <text>Truncated N-terminus.</text>
</comment>
<keyword id="KW-1185">Reference proteome</keyword>
<dbReference type="EMBL" id="AB016888">
    <property type="protein sequence ID" value="BAB10487.1"/>
    <property type="status" value="ALT_INIT"/>
    <property type="molecule type" value="Genomic_DNA"/>
</dbReference>
<dbReference type="EMBL" id="CP002688">
    <property type="protein sequence ID" value="AED94813.1"/>
    <property type="molecule type" value="Genomic_DNA"/>
</dbReference>
<dbReference type="EMBL" id="AK227463">
    <property type="protein sequence ID" value="BAE99466.1"/>
    <property type="status" value="ALT_INIT"/>
    <property type="molecule type" value="mRNA"/>
</dbReference>
<dbReference type="EMBL" id="BT005881">
    <property type="protein sequence ID" value="AAO64816.1"/>
    <property type="molecule type" value="mRNA"/>
</dbReference>
<dbReference type="RefSeq" id="NP_199061.3">
    <property type="nucleotide sequence ID" value="NM_123611.6"/>
</dbReference>
<dbReference type="FunCoup" id="Q9FIH1">
    <property type="interactions" value="7"/>
</dbReference>
<dbReference type="STRING" id="3702.Q9FIH1"/>
<dbReference type="PaxDb" id="3702-AT5G42460.1"/>
<dbReference type="ProteomicsDB" id="230998"/>
<dbReference type="EnsemblPlants" id="AT5G42460.1">
    <property type="protein sequence ID" value="AT5G42460.1"/>
    <property type="gene ID" value="AT5G42460"/>
</dbReference>
<dbReference type="GeneID" id="834253"/>
<dbReference type="Gramene" id="AT5G42460.1">
    <property type="protein sequence ID" value="AT5G42460.1"/>
    <property type="gene ID" value="AT5G42460"/>
</dbReference>
<dbReference type="KEGG" id="ath:AT5G42460"/>
<dbReference type="Araport" id="AT5G42460"/>
<dbReference type="TAIR" id="AT5G42460"/>
<dbReference type="HOGENOM" id="CLU_034692_0_0_1"/>
<dbReference type="InParanoid" id="Q9FIH1"/>
<dbReference type="OMA" id="HHQVDNV"/>
<dbReference type="PRO" id="PR:Q9FIH1"/>
<dbReference type="Proteomes" id="UP000006548">
    <property type="component" value="Chromosome 5"/>
</dbReference>
<dbReference type="ExpressionAtlas" id="Q9FIH1">
    <property type="expression patterns" value="baseline and differential"/>
</dbReference>
<dbReference type="CDD" id="cd22157">
    <property type="entry name" value="F-box_AtFBW1-like"/>
    <property type="match status" value="1"/>
</dbReference>
<dbReference type="Gene3D" id="1.20.1280.50">
    <property type="match status" value="1"/>
</dbReference>
<dbReference type="InterPro" id="IPR006527">
    <property type="entry name" value="F-box-assoc_dom_typ1"/>
</dbReference>
<dbReference type="InterPro" id="IPR017451">
    <property type="entry name" value="F-box-assoc_interact_dom"/>
</dbReference>
<dbReference type="InterPro" id="IPR036047">
    <property type="entry name" value="F-box-like_dom_sf"/>
</dbReference>
<dbReference type="InterPro" id="IPR001810">
    <property type="entry name" value="F-box_dom"/>
</dbReference>
<dbReference type="InterPro" id="IPR011043">
    <property type="entry name" value="Gal_Oxase/kelch_b-propeller"/>
</dbReference>
<dbReference type="InterPro" id="IPR050796">
    <property type="entry name" value="SCF_F-box_component"/>
</dbReference>
<dbReference type="NCBIfam" id="TIGR01640">
    <property type="entry name" value="F_box_assoc_1"/>
    <property type="match status" value="1"/>
</dbReference>
<dbReference type="PANTHER" id="PTHR31672">
    <property type="entry name" value="BNACNNG10540D PROTEIN"/>
    <property type="match status" value="1"/>
</dbReference>
<dbReference type="PANTHER" id="PTHR31672:SF13">
    <property type="entry name" value="F-BOX PROTEIN CPR30-LIKE"/>
    <property type="match status" value="1"/>
</dbReference>
<dbReference type="Pfam" id="PF00646">
    <property type="entry name" value="F-box"/>
    <property type="match status" value="1"/>
</dbReference>
<dbReference type="Pfam" id="PF07734">
    <property type="entry name" value="FBA_1"/>
    <property type="match status" value="1"/>
</dbReference>
<dbReference type="SMART" id="SM00256">
    <property type="entry name" value="FBOX"/>
    <property type="match status" value="1"/>
</dbReference>
<dbReference type="SUPFAM" id="SSF81383">
    <property type="entry name" value="F-box domain"/>
    <property type="match status" value="1"/>
</dbReference>
<dbReference type="SUPFAM" id="SSF50965">
    <property type="entry name" value="Galactose oxidase, central domain"/>
    <property type="match status" value="1"/>
</dbReference>
<dbReference type="PROSITE" id="PS50181">
    <property type="entry name" value="FBOX"/>
    <property type="match status" value="1"/>
</dbReference>
<gene>
    <name type="ordered locus">At5g42460</name>
    <name type="ORF">MDH9.16</name>
</gene>
<accession>Q9FIH1</accession>
<accession>Q84TD9</accession>
<feature type="chain" id="PRO_0000283547" description="F-box protein At5g42460">
    <location>
        <begin position="1"/>
        <end position="388"/>
    </location>
</feature>
<feature type="domain" description="F-box" evidence="1">
    <location>
        <begin position="1"/>
        <end position="47"/>
    </location>
</feature>
<reference key="1">
    <citation type="journal article" date="1998" name="DNA Res.">
        <title>Structural analysis of Arabidopsis thaliana chromosome 5. VIII. Sequence features of the regions of 1,081,958 bp covered by seventeen physically assigned P1 and TAC clones.</title>
        <authorList>
            <person name="Asamizu E."/>
            <person name="Sato S."/>
            <person name="Kaneko T."/>
            <person name="Nakamura Y."/>
            <person name="Kotani H."/>
            <person name="Miyajima N."/>
            <person name="Tabata S."/>
        </authorList>
    </citation>
    <scope>NUCLEOTIDE SEQUENCE [LARGE SCALE GENOMIC DNA]</scope>
    <source>
        <strain>cv. Columbia</strain>
    </source>
</reference>
<reference key="2">
    <citation type="journal article" date="2017" name="Plant J.">
        <title>Araport11: a complete reannotation of the Arabidopsis thaliana reference genome.</title>
        <authorList>
            <person name="Cheng C.Y."/>
            <person name="Krishnakumar V."/>
            <person name="Chan A.P."/>
            <person name="Thibaud-Nissen F."/>
            <person name="Schobel S."/>
            <person name="Town C.D."/>
        </authorList>
    </citation>
    <scope>GENOME REANNOTATION</scope>
    <source>
        <strain>cv. Columbia</strain>
    </source>
</reference>
<reference key="3">
    <citation type="submission" date="2006-07" db="EMBL/GenBank/DDBJ databases">
        <title>Large-scale analysis of RIKEN Arabidopsis full-length (RAFL) cDNAs.</title>
        <authorList>
            <person name="Totoki Y."/>
            <person name="Seki M."/>
            <person name="Ishida J."/>
            <person name="Nakajima M."/>
            <person name="Enju A."/>
            <person name="Kamiya A."/>
            <person name="Narusaka M."/>
            <person name="Shin-i T."/>
            <person name="Nakagawa M."/>
            <person name="Sakamoto N."/>
            <person name="Oishi K."/>
            <person name="Kohara Y."/>
            <person name="Kobayashi M."/>
            <person name="Toyoda A."/>
            <person name="Sakaki Y."/>
            <person name="Sakurai T."/>
            <person name="Iida K."/>
            <person name="Akiyama K."/>
            <person name="Satou M."/>
            <person name="Toyoda T."/>
            <person name="Konagaya A."/>
            <person name="Carninci P."/>
            <person name="Kawai J."/>
            <person name="Hayashizaki Y."/>
            <person name="Shinozaki K."/>
        </authorList>
    </citation>
    <scope>NUCLEOTIDE SEQUENCE [LARGE SCALE MRNA] OF 9-388</scope>
    <source>
        <strain>cv. Columbia</strain>
    </source>
</reference>
<reference key="4">
    <citation type="journal article" date="2003" name="Science">
        <title>Empirical analysis of transcriptional activity in the Arabidopsis genome.</title>
        <authorList>
            <person name="Yamada K."/>
            <person name="Lim J."/>
            <person name="Dale J.M."/>
            <person name="Chen H."/>
            <person name="Shinn P."/>
            <person name="Palm C.J."/>
            <person name="Southwick A.M."/>
            <person name="Wu H.C."/>
            <person name="Kim C.J."/>
            <person name="Nguyen M."/>
            <person name="Pham P.K."/>
            <person name="Cheuk R.F."/>
            <person name="Karlin-Newmann G."/>
            <person name="Liu S.X."/>
            <person name="Lam B."/>
            <person name="Sakano H."/>
            <person name="Wu T."/>
            <person name="Yu G."/>
            <person name="Miranda M."/>
            <person name="Quach H.L."/>
            <person name="Tripp M."/>
            <person name="Chang C.H."/>
            <person name="Lee J.M."/>
            <person name="Toriumi M.J."/>
            <person name="Chan M.M."/>
            <person name="Tang C.C."/>
            <person name="Onodera C.S."/>
            <person name="Deng J.M."/>
            <person name="Akiyama K."/>
            <person name="Ansari Y."/>
            <person name="Arakawa T."/>
            <person name="Banh J."/>
            <person name="Banno F."/>
            <person name="Bowser L."/>
            <person name="Brooks S.Y."/>
            <person name="Carninci P."/>
            <person name="Chao Q."/>
            <person name="Choy N."/>
            <person name="Enju A."/>
            <person name="Goldsmith A.D."/>
            <person name="Gurjal M."/>
            <person name="Hansen N.F."/>
            <person name="Hayashizaki Y."/>
            <person name="Johnson-Hopson C."/>
            <person name="Hsuan V.W."/>
            <person name="Iida K."/>
            <person name="Karnes M."/>
            <person name="Khan S."/>
            <person name="Koesema E."/>
            <person name="Ishida J."/>
            <person name="Jiang P.X."/>
            <person name="Jones T."/>
            <person name="Kawai J."/>
            <person name="Kamiya A."/>
            <person name="Meyers C."/>
            <person name="Nakajima M."/>
            <person name="Narusaka M."/>
            <person name="Seki M."/>
            <person name="Sakurai T."/>
            <person name="Satou M."/>
            <person name="Tamse R."/>
            <person name="Vaysberg M."/>
            <person name="Wallender E.K."/>
            <person name="Wong C."/>
            <person name="Yamamura Y."/>
            <person name="Yuan S."/>
            <person name="Shinozaki K."/>
            <person name="Davis R.W."/>
            <person name="Theologis A."/>
            <person name="Ecker J.R."/>
        </authorList>
    </citation>
    <scope>NUCLEOTIDE SEQUENCE [LARGE SCALE MRNA] OF 65-388</scope>
    <source>
        <strain>cv. Columbia</strain>
    </source>
</reference>
<name>FB281_ARATH</name>
<organism>
    <name type="scientific">Arabidopsis thaliana</name>
    <name type="common">Mouse-ear cress</name>
    <dbReference type="NCBI Taxonomy" id="3702"/>
    <lineage>
        <taxon>Eukaryota</taxon>
        <taxon>Viridiplantae</taxon>
        <taxon>Streptophyta</taxon>
        <taxon>Embryophyta</taxon>
        <taxon>Tracheophyta</taxon>
        <taxon>Spermatophyta</taxon>
        <taxon>Magnoliopsida</taxon>
        <taxon>eudicotyledons</taxon>
        <taxon>Gunneridae</taxon>
        <taxon>Pentapetalae</taxon>
        <taxon>rosids</taxon>
        <taxon>malvids</taxon>
        <taxon>Brassicales</taxon>
        <taxon>Brassicaceae</taxon>
        <taxon>Camelineae</taxon>
        <taxon>Arabidopsis</taxon>
    </lineage>
</organism>
<protein>
    <recommendedName>
        <fullName>F-box protein At5g42460</fullName>
    </recommendedName>
</protein>
<sequence length="388" mass="45311">MTIMSDLPRDLLAEILSRVPLTSLRAVRLTCKKWNDLSKDRSFLKKQIVETKKKQLESKEIEVIMMRNFRVYLTSIDIHNNVDPSFTPKGTLISLSDDANHHQVDNVSRVFHCDGLLLCITKDLHYRLVVWNPYFGQTRWIQPRNSYHRKDNYALGYDEKKNHKILRLKDNYYAPRERICEFELYSFESNSWKVVLDVSPDWYIPSYNRGLSLKGNTYWYATEKHVNVDFLICFDFTTEKFGPRLPLPFNATESPTYEDVVTLSSVGEEQLAVLFQSEYTLMMEIWVTSKVESTEVLWNKLFLEVDLIAISSHFQFLAEAGSFFIDQKKNVVVVFDKDMDEATDRDMAYVVGKNGYFKKVDIGEEAYTSCFPLVCSYVPSSEQIRQLT</sequence>
<evidence type="ECO:0000255" key="1">
    <source>
        <dbReference type="PROSITE-ProRule" id="PRU00080"/>
    </source>
</evidence>
<evidence type="ECO:0000305" key="2"/>
<proteinExistence type="evidence at transcript level"/>